<organism>
    <name type="scientific">Arabidopsis thaliana</name>
    <name type="common">Mouse-ear cress</name>
    <dbReference type="NCBI Taxonomy" id="3702"/>
    <lineage>
        <taxon>Eukaryota</taxon>
        <taxon>Viridiplantae</taxon>
        <taxon>Streptophyta</taxon>
        <taxon>Embryophyta</taxon>
        <taxon>Tracheophyta</taxon>
        <taxon>Spermatophyta</taxon>
        <taxon>Magnoliopsida</taxon>
        <taxon>eudicotyledons</taxon>
        <taxon>Gunneridae</taxon>
        <taxon>Pentapetalae</taxon>
        <taxon>rosids</taxon>
        <taxon>malvids</taxon>
        <taxon>Brassicales</taxon>
        <taxon>Brassicaceae</taxon>
        <taxon>Camelineae</taxon>
        <taxon>Arabidopsis</taxon>
    </lineage>
</organism>
<evidence type="ECO:0000250" key="1"/>
<evidence type="ECO:0000305" key="2"/>
<dbReference type="EC" id="2.4.1.-"/>
<dbReference type="EMBL" id="AL035602">
    <property type="protein sequence ID" value="CAB38268.1"/>
    <property type="molecule type" value="Genomic_DNA"/>
</dbReference>
<dbReference type="EMBL" id="AL161571">
    <property type="protein sequence ID" value="CAB81406.1"/>
    <property type="molecule type" value="Genomic_DNA"/>
</dbReference>
<dbReference type="EMBL" id="CP002687">
    <property type="protein sequence ID" value="AEE85357.1"/>
    <property type="molecule type" value="Genomic_DNA"/>
</dbReference>
<dbReference type="EMBL" id="AY057552">
    <property type="protein sequence ID" value="AAL09791.1"/>
    <property type="status" value="ALT_FRAME"/>
    <property type="molecule type" value="mRNA"/>
</dbReference>
<dbReference type="EMBL" id="AY070428">
    <property type="protein sequence ID" value="AAL49923.1"/>
    <property type="molecule type" value="mRNA"/>
</dbReference>
<dbReference type="EMBL" id="AY142589">
    <property type="protein sequence ID" value="AAN13158.1"/>
    <property type="molecule type" value="mRNA"/>
</dbReference>
<dbReference type="EMBL" id="AY087933">
    <property type="protein sequence ID" value="AAM65481.1"/>
    <property type="status" value="ALT_INIT"/>
    <property type="molecule type" value="mRNA"/>
</dbReference>
<dbReference type="EMBL" id="AK226541">
    <property type="protein sequence ID" value="BAE98680.1"/>
    <property type="molecule type" value="mRNA"/>
</dbReference>
<dbReference type="PIR" id="T05861">
    <property type="entry name" value="T05861"/>
</dbReference>
<dbReference type="RefSeq" id="NP_194486.1">
    <property type="nucleotide sequence ID" value="NM_118891.5"/>
</dbReference>
<dbReference type="SMR" id="Q9T080"/>
<dbReference type="FunCoup" id="Q9T080">
    <property type="interactions" value="11"/>
</dbReference>
<dbReference type="STRING" id="3702.Q9T080"/>
<dbReference type="CAZy" id="GT1">
    <property type="family name" value="Glycosyltransferase Family 1"/>
</dbReference>
<dbReference type="PaxDb" id="3702-AT4G27560.1"/>
<dbReference type="ProteomicsDB" id="228653"/>
<dbReference type="EnsemblPlants" id="AT4G27560.1">
    <property type="protein sequence ID" value="AT4G27560.1"/>
    <property type="gene ID" value="AT4G27560"/>
</dbReference>
<dbReference type="GeneID" id="828865"/>
<dbReference type="Gramene" id="AT4G27560.1">
    <property type="protein sequence ID" value="AT4G27560.1"/>
    <property type="gene ID" value="AT4G27560"/>
</dbReference>
<dbReference type="KEGG" id="ath:AT4G27560"/>
<dbReference type="Araport" id="AT4G27560"/>
<dbReference type="TAIR" id="AT4G27560">
    <property type="gene designation" value="UGT79B2"/>
</dbReference>
<dbReference type="eggNOG" id="KOG1192">
    <property type="taxonomic scope" value="Eukaryota"/>
</dbReference>
<dbReference type="HOGENOM" id="CLU_001724_2_3_1"/>
<dbReference type="InParanoid" id="Q9T080"/>
<dbReference type="OMA" id="FHALMYP"/>
<dbReference type="OrthoDB" id="5835829at2759"/>
<dbReference type="PhylomeDB" id="Q9T080"/>
<dbReference type="BioCyc" id="ARA:AT4G27560-MONOMER"/>
<dbReference type="PRO" id="PR:Q9T080"/>
<dbReference type="Proteomes" id="UP000006548">
    <property type="component" value="Chromosome 4"/>
</dbReference>
<dbReference type="ExpressionAtlas" id="Q9T080">
    <property type="expression patterns" value="baseline and differential"/>
</dbReference>
<dbReference type="GO" id="GO:0035251">
    <property type="term" value="F:UDP-glucosyltransferase activity"/>
    <property type="evidence" value="ECO:0007669"/>
    <property type="project" value="InterPro"/>
</dbReference>
<dbReference type="GO" id="GO:0008194">
    <property type="term" value="F:UDP-glycosyltransferase activity"/>
    <property type="evidence" value="ECO:0000314"/>
    <property type="project" value="TAIR"/>
</dbReference>
<dbReference type="GO" id="GO:0046283">
    <property type="term" value="P:anthocyanin-containing compound metabolic process"/>
    <property type="evidence" value="ECO:0000315"/>
    <property type="project" value="TAIR"/>
</dbReference>
<dbReference type="CDD" id="cd03784">
    <property type="entry name" value="GT1_Gtf-like"/>
    <property type="match status" value="1"/>
</dbReference>
<dbReference type="FunFam" id="3.40.50.2000:FF:000037">
    <property type="entry name" value="Glycosyltransferase"/>
    <property type="match status" value="1"/>
</dbReference>
<dbReference type="FunFam" id="3.40.50.2000:FF:000087">
    <property type="entry name" value="Glycosyltransferase"/>
    <property type="match status" value="1"/>
</dbReference>
<dbReference type="Gene3D" id="3.40.50.2000">
    <property type="entry name" value="Glycogen Phosphorylase B"/>
    <property type="match status" value="2"/>
</dbReference>
<dbReference type="InterPro" id="IPR050481">
    <property type="entry name" value="UDP-glycosyltransf_plant"/>
</dbReference>
<dbReference type="InterPro" id="IPR002213">
    <property type="entry name" value="UDP_glucos_trans"/>
</dbReference>
<dbReference type="InterPro" id="IPR035595">
    <property type="entry name" value="UDP_glycos_trans_CS"/>
</dbReference>
<dbReference type="PANTHER" id="PTHR48049:SF176">
    <property type="entry name" value="ANTHOCYANIDIN 3-O-GLUCOSIDE 2'''-O-XYLOSYLTRANSFERASE-RELATED"/>
    <property type="match status" value="1"/>
</dbReference>
<dbReference type="PANTHER" id="PTHR48049">
    <property type="entry name" value="GLYCOSYLTRANSFERASE"/>
    <property type="match status" value="1"/>
</dbReference>
<dbReference type="Pfam" id="PF00201">
    <property type="entry name" value="UDPGT"/>
    <property type="match status" value="1"/>
</dbReference>
<dbReference type="SUPFAM" id="SSF53756">
    <property type="entry name" value="UDP-Glycosyltransferase/glycogen phosphorylase"/>
    <property type="match status" value="1"/>
</dbReference>
<dbReference type="PROSITE" id="PS00375">
    <property type="entry name" value="UDPGT"/>
    <property type="match status" value="1"/>
</dbReference>
<comment type="similarity">
    <text evidence="2">Belongs to the UDP-glycosyltransferase family.</text>
</comment>
<comment type="sequence caution" evidence="2">
    <conflict type="frameshift">
        <sequence resource="EMBL-CDS" id="AAL09791"/>
    </conflict>
</comment>
<comment type="sequence caution" evidence="2">
    <conflict type="erroneous initiation">
        <sequence resource="EMBL-CDS" id="AAM65481"/>
    </conflict>
    <text>Truncated N-terminus.</text>
</comment>
<gene>
    <name type="primary">UGT79B2</name>
    <name type="ordered locus">At4g27560</name>
    <name type="ORF">T29A15.50</name>
</gene>
<keyword id="KW-0328">Glycosyltransferase</keyword>
<keyword id="KW-1185">Reference proteome</keyword>
<keyword id="KW-0808">Transferase</keyword>
<sequence length="455" mass="50615">MGGLKFHVLMYPWFATGHMTPFLFLANKLAEKGHTVTFLIPKKALKQLENLNLFPHNIVFRSVTVPHVDGLPVGTETVSEIPVTSADLLMSAMDLTRDQVEGVVRAVEPDLIFFDFAHWIPEVARDFGLKTVKYVVVSASTIASMLVPGGELGVPPPGYPSSKVLLRKQDAYTMKNLESTNTINVGPNLLERVTTSLMNSDVIAIRTAREIEGNFCDYIEKHCRKKVLLTGPVFPEPDKTRELEERWVKWLSGYEPDSVVFCALGSQVILEKDQFQELCLGMELTGSPFLVAVKPPRGSSTIQEALPEGFEERVKGRGVVWGEWVQQPLLLSHPSVGCFVSHCGFGSMWESLLSDCQIVLVPQLGDQVLNTRLLSDELKVSVEVAREETGWFSKESLFDAINSVMKRDSEIGNLVKKNHTKWRETLTSPGLVTGYVDNFIESLQDLVSGTNHVSK</sequence>
<feature type="chain" id="PRO_0000409108" description="UDP-glycosyltransferase 79B2">
    <location>
        <begin position="1"/>
        <end position="455"/>
    </location>
</feature>
<feature type="binding site" evidence="1">
    <location>
        <position position="266"/>
    </location>
    <ligand>
        <name>UDP-alpha-D-glucose</name>
        <dbReference type="ChEBI" id="CHEBI:58885"/>
    </ligand>
</feature>
<feature type="binding site" evidence="1">
    <location>
        <begin position="325"/>
        <end position="327"/>
    </location>
    <ligand>
        <name>UDP-alpha-D-glucose</name>
        <dbReference type="ChEBI" id="CHEBI:58885"/>
    </ligand>
</feature>
<feature type="binding site" evidence="1">
    <location>
        <begin position="342"/>
        <end position="350"/>
    </location>
    <ligand>
        <name>UDP-alpha-D-glucose</name>
        <dbReference type="ChEBI" id="CHEBI:58885"/>
    </ligand>
</feature>
<feature type="binding site" evidence="1">
    <location>
        <begin position="364"/>
        <end position="367"/>
    </location>
    <ligand>
        <name>UDP-alpha-D-glucose</name>
        <dbReference type="ChEBI" id="CHEBI:58885"/>
    </ligand>
</feature>
<feature type="sequence conflict" description="In Ref. 3; AAL09791." evidence="2" ref="3">
    <original>V</original>
    <variation>A</variation>
    <location>
        <position position="59"/>
    </location>
</feature>
<protein>
    <recommendedName>
        <fullName>UDP-glycosyltransferase 79B2</fullName>
        <ecNumber>2.4.1.-</ecNumber>
    </recommendedName>
</protein>
<accession>Q9T080</accession>
<accession>Q0WW18</accession>
<accession>Q8LAB5</accession>
<accession>Q93ZG5</accession>
<reference key="1">
    <citation type="journal article" date="1999" name="Nature">
        <title>Sequence and analysis of chromosome 4 of the plant Arabidopsis thaliana.</title>
        <authorList>
            <person name="Mayer K.F.X."/>
            <person name="Schueller C."/>
            <person name="Wambutt R."/>
            <person name="Murphy G."/>
            <person name="Volckaert G."/>
            <person name="Pohl T."/>
            <person name="Duesterhoeft A."/>
            <person name="Stiekema W."/>
            <person name="Entian K.-D."/>
            <person name="Terryn N."/>
            <person name="Harris B."/>
            <person name="Ansorge W."/>
            <person name="Brandt P."/>
            <person name="Grivell L.A."/>
            <person name="Rieger M."/>
            <person name="Weichselgartner M."/>
            <person name="de Simone V."/>
            <person name="Obermaier B."/>
            <person name="Mache R."/>
            <person name="Mueller M."/>
            <person name="Kreis M."/>
            <person name="Delseny M."/>
            <person name="Puigdomenech P."/>
            <person name="Watson M."/>
            <person name="Schmidtheini T."/>
            <person name="Reichert B."/>
            <person name="Portetelle D."/>
            <person name="Perez-Alonso M."/>
            <person name="Boutry M."/>
            <person name="Bancroft I."/>
            <person name="Vos P."/>
            <person name="Hoheisel J."/>
            <person name="Zimmermann W."/>
            <person name="Wedler H."/>
            <person name="Ridley P."/>
            <person name="Langham S.-A."/>
            <person name="McCullagh B."/>
            <person name="Bilham L."/>
            <person name="Robben J."/>
            <person name="van der Schueren J."/>
            <person name="Grymonprez B."/>
            <person name="Chuang Y.-J."/>
            <person name="Vandenbussche F."/>
            <person name="Braeken M."/>
            <person name="Weltjens I."/>
            <person name="Voet M."/>
            <person name="Bastiaens I."/>
            <person name="Aert R."/>
            <person name="Defoor E."/>
            <person name="Weitzenegger T."/>
            <person name="Bothe G."/>
            <person name="Ramsperger U."/>
            <person name="Hilbert H."/>
            <person name="Braun M."/>
            <person name="Holzer E."/>
            <person name="Brandt A."/>
            <person name="Peters S."/>
            <person name="van Staveren M."/>
            <person name="Dirkse W."/>
            <person name="Mooijman P."/>
            <person name="Klein Lankhorst R."/>
            <person name="Rose M."/>
            <person name="Hauf J."/>
            <person name="Koetter P."/>
            <person name="Berneiser S."/>
            <person name="Hempel S."/>
            <person name="Feldpausch M."/>
            <person name="Lamberth S."/>
            <person name="Van den Daele H."/>
            <person name="De Keyser A."/>
            <person name="Buysshaert C."/>
            <person name="Gielen J."/>
            <person name="Villarroel R."/>
            <person name="De Clercq R."/>
            <person name="van Montagu M."/>
            <person name="Rogers J."/>
            <person name="Cronin A."/>
            <person name="Quail M.A."/>
            <person name="Bray-Allen S."/>
            <person name="Clark L."/>
            <person name="Doggett J."/>
            <person name="Hall S."/>
            <person name="Kay M."/>
            <person name="Lennard N."/>
            <person name="McLay K."/>
            <person name="Mayes R."/>
            <person name="Pettett A."/>
            <person name="Rajandream M.A."/>
            <person name="Lyne M."/>
            <person name="Benes V."/>
            <person name="Rechmann S."/>
            <person name="Borkova D."/>
            <person name="Bloecker H."/>
            <person name="Scharfe M."/>
            <person name="Grimm M."/>
            <person name="Loehnert T.-H."/>
            <person name="Dose S."/>
            <person name="de Haan M."/>
            <person name="Maarse A.C."/>
            <person name="Schaefer M."/>
            <person name="Mueller-Auer S."/>
            <person name="Gabel C."/>
            <person name="Fuchs M."/>
            <person name="Fartmann B."/>
            <person name="Granderath K."/>
            <person name="Dauner D."/>
            <person name="Herzl A."/>
            <person name="Neumann S."/>
            <person name="Argiriou A."/>
            <person name="Vitale D."/>
            <person name="Liguori R."/>
            <person name="Piravandi E."/>
            <person name="Massenet O."/>
            <person name="Quigley F."/>
            <person name="Clabauld G."/>
            <person name="Muendlein A."/>
            <person name="Felber R."/>
            <person name="Schnabl S."/>
            <person name="Hiller R."/>
            <person name="Schmidt W."/>
            <person name="Lecharny A."/>
            <person name="Aubourg S."/>
            <person name="Chefdor F."/>
            <person name="Cooke R."/>
            <person name="Berger C."/>
            <person name="Monfort A."/>
            <person name="Casacuberta E."/>
            <person name="Gibbons T."/>
            <person name="Weber N."/>
            <person name="Vandenbol M."/>
            <person name="Bargues M."/>
            <person name="Terol J."/>
            <person name="Torres A."/>
            <person name="Perez-Perez A."/>
            <person name="Purnelle B."/>
            <person name="Bent E."/>
            <person name="Johnson S."/>
            <person name="Tacon D."/>
            <person name="Jesse T."/>
            <person name="Heijnen L."/>
            <person name="Schwarz S."/>
            <person name="Scholler P."/>
            <person name="Heber S."/>
            <person name="Francs P."/>
            <person name="Bielke C."/>
            <person name="Frishman D."/>
            <person name="Haase D."/>
            <person name="Lemcke K."/>
            <person name="Mewes H.-W."/>
            <person name="Stocker S."/>
            <person name="Zaccaria P."/>
            <person name="Bevan M."/>
            <person name="Wilson R.K."/>
            <person name="de la Bastide M."/>
            <person name="Habermann K."/>
            <person name="Parnell L."/>
            <person name="Dedhia N."/>
            <person name="Gnoj L."/>
            <person name="Schutz K."/>
            <person name="Huang E."/>
            <person name="Spiegel L."/>
            <person name="Sekhon M."/>
            <person name="Murray J."/>
            <person name="Sheet P."/>
            <person name="Cordes M."/>
            <person name="Abu-Threideh J."/>
            <person name="Stoneking T."/>
            <person name="Kalicki J."/>
            <person name="Graves T."/>
            <person name="Harmon G."/>
            <person name="Edwards J."/>
            <person name="Latreille P."/>
            <person name="Courtney L."/>
            <person name="Cloud J."/>
            <person name="Abbott A."/>
            <person name="Scott K."/>
            <person name="Johnson D."/>
            <person name="Minx P."/>
            <person name="Bentley D."/>
            <person name="Fulton B."/>
            <person name="Miller N."/>
            <person name="Greco T."/>
            <person name="Kemp K."/>
            <person name="Kramer J."/>
            <person name="Fulton L."/>
            <person name="Mardis E."/>
            <person name="Dante M."/>
            <person name="Pepin K."/>
            <person name="Hillier L.W."/>
            <person name="Nelson J."/>
            <person name="Spieth J."/>
            <person name="Ryan E."/>
            <person name="Andrews S."/>
            <person name="Geisel C."/>
            <person name="Layman D."/>
            <person name="Du H."/>
            <person name="Ali J."/>
            <person name="Berghoff A."/>
            <person name="Jones K."/>
            <person name="Drone K."/>
            <person name="Cotton M."/>
            <person name="Joshu C."/>
            <person name="Antonoiu B."/>
            <person name="Zidanic M."/>
            <person name="Strong C."/>
            <person name="Sun H."/>
            <person name="Lamar B."/>
            <person name="Yordan C."/>
            <person name="Ma P."/>
            <person name="Zhong J."/>
            <person name="Preston R."/>
            <person name="Vil D."/>
            <person name="Shekher M."/>
            <person name="Matero A."/>
            <person name="Shah R."/>
            <person name="Swaby I.K."/>
            <person name="O'Shaughnessy A."/>
            <person name="Rodriguez M."/>
            <person name="Hoffman J."/>
            <person name="Till S."/>
            <person name="Granat S."/>
            <person name="Shohdy N."/>
            <person name="Hasegawa A."/>
            <person name="Hameed A."/>
            <person name="Lodhi M."/>
            <person name="Johnson A."/>
            <person name="Chen E."/>
            <person name="Marra M.A."/>
            <person name="Martienssen R."/>
            <person name="McCombie W.R."/>
        </authorList>
    </citation>
    <scope>NUCLEOTIDE SEQUENCE [LARGE SCALE GENOMIC DNA]</scope>
    <source>
        <strain>cv. Columbia</strain>
    </source>
</reference>
<reference key="2">
    <citation type="journal article" date="2017" name="Plant J.">
        <title>Araport11: a complete reannotation of the Arabidopsis thaliana reference genome.</title>
        <authorList>
            <person name="Cheng C.Y."/>
            <person name="Krishnakumar V."/>
            <person name="Chan A.P."/>
            <person name="Thibaud-Nissen F."/>
            <person name="Schobel S."/>
            <person name="Town C.D."/>
        </authorList>
    </citation>
    <scope>GENOME REANNOTATION</scope>
    <source>
        <strain>cv. Columbia</strain>
    </source>
</reference>
<reference key="3">
    <citation type="journal article" date="2003" name="Science">
        <title>Empirical analysis of transcriptional activity in the Arabidopsis genome.</title>
        <authorList>
            <person name="Yamada K."/>
            <person name="Lim J."/>
            <person name="Dale J.M."/>
            <person name="Chen H."/>
            <person name="Shinn P."/>
            <person name="Palm C.J."/>
            <person name="Southwick A.M."/>
            <person name="Wu H.C."/>
            <person name="Kim C.J."/>
            <person name="Nguyen M."/>
            <person name="Pham P.K."/>
            <person name="Cheuk R.F."/>
            <person name="Karlin-Newmann G."/>
            <person name="Liu S.X."/>
            <person name="Lam B."/>
            <person name="Sakano H."/>
            <person name="Wu T."/>
            <person name="Yu G."/>
            <person name="Miranda M."/>
            <person name="Quach H.L."/>
            <person name="Tripp M."/>
            <person name="Chang C.H."/>
            <person name="Lee J.M."/>
            <person name="Toriumi M.J."/>
            <person name="Chan M.M."/>
            <person name="Tang C.C."/>
            <person name="Onodera C.S."/>
            <person name="Deng J.M."/>
            <person name="Akiyama K."/>
            <person name="Ansari Y."/>
            <person name="Arakawa T."/>
            <person name="Banh J."/>
            <person name="Banno F."/>
            <person name="Bowser L."/>
            <person name="Brooks S.Y."/>
            <person name="Carninci P."/>
            <person name="Chao Q."/>
            <person name="Choy N."/>
            <person name="Enju A."/>
            <person name="Goldsmith A.D."/>
            <person name="Gurjal M."/>
            <person name="Hansen N.F."/>
            <person name="Hayashizaki Y."/>
            <person name="Johnson-Hopson C."/>
            <person name="Hsuan V.W."/>
            <person name="Iida K."/>
            <person name="Karnes M."/>
            <person name="Khan S."/>
            <person name="Koesema E."/>
            <person name="Ishida J."/>
            <person name="Jiang P.X."/>
            <person name="Jones T."/>
            <person name="Kawai J."/>
            <person name="Kamiya A."/>
            <person name="Meyers C."/>
            <person name="Nakajima M."/>
            <person name="Narusaka M."/>
            <person name="Seki M."/>
            <person name="Sakurai T."/>
            <person name="Satou M."/>
            <person name="Tamse R."/>
            <person name="Vaysberg M."/>
            <person name="Wallender E.K."/>
            <person name="Wong C."/>
            <person name="Yamamura Y."/>
            <person name="Yuan S."/>
            <person name="Shinozaki K."/>
            <person name="Davis R.W."/>
            <person name="Theologis A."/>
            <person name="Ecker J.R."/>
        </authorList>
    </citation>
    <scope>NUCLEOTIDE SEQUENCE [LARGE SCALE MRNA]</scope>
    <source>
        <strain>cv. Columbia</strain>
    </source>
</reference>
<reference key="4">
    <citation type="submission" date="2002-03" db="EMBL/GenBank/DDBJ databases">
        <title>Full-length cDNA from Arabidopsis thaliana.</title>
        <authorList>
            <person name="Brover V.V."/>
            <person name="Troukhan M.E."/>
            <person name="Alexandrov N.A."/>
            <person name="Lu Y.-P."/>
            <person name="Flavell R.B."/>
            <person name="Feldmann K.A."/>
        </authorList>
    </citation>
    <scope>NUCLEOTIDE SEQUENCE [LARGE SCALE MRNA]</scope>
</reference>
<reference key="5">
    <citation type="submission" date="2006-07" db="EMBL/GenBank/DDBJ databases">
        <title>Large-scale analysis of RIKEN Arabidopsis full-length (RAFL) cDNAs.</title>
        <authorList>
            <person name="Totoki Y."/>
            <person name="Seki M."/>
            <person name="Ishida J."/>
            <person name="Nakajima M."/>
            <person name="Enju A."/>
            <person name="Kamiya A."/>
            <person name="Narusaka M."/>
            <person name="Shin-i T."/>
            <person name="Nakagawa M."/>
            <person name="Sakamoto N."/>
            <person name="Oishi K."/>
            <person name="Kohara Y."/>
            <person name="Kobayashi M."/>
            <person name="Toyoda A."/>
            <person name="Sakaki Y."/>
            <person name="Sakurai T."/>
            <person name="Iida K."/>
            <person name="Akiyama K."/>
            <person name="Satou M."/>
            <person name="Toyoda T."/>
            <person name="Konagaya A."/>
            <person name="Carninci P."/>
            <person name="Kawai J."/>
            <person name="Hayashizaki Y."/>
            <person name="Shinozaki K."/>
        </authorList>
    </citation>
    <scope>NUCLEOTIDE SEQUENCE [LARGE SCALE MRNA] OF 21-455</scope>
    <source>
        <strain>cv. Columbia</strain>
    </source>
</reference>
<reference key="6">
    <citation type="journal article" date="2001" name="J. Biol. Chem.">
        <title>Phylogenetic analysis of the UDP-glycosyltransferase multigene family of Arabidopsis thaliana.</title>
        <authorList>
            <person name="Li Y."/>
            <person name="Baldauf S."/>
            <person name="Lim E.K."/>
            <person name="Bowles D.J."/>
        </authorList>
    </citation>
    <scope>GENE FAMILY</scope>
</reference>
<proteinExistence type="evidence at transcript level"/>
<name>U79B2_ARATH</name>